<sequence length="351" mass="38240">MQPSIRSYLRTGPGYVYAAHSGTARETGRIACLASNENPFPPSEAAIAAGAAALATVNRYPDDRMTDLTEALKRLHGDHTFVVGNGMDGIIETVLRCFIGHGDRVVVSTPTFSFYGIAAAGQGAIVENIQRKEDFTVDIPAFTRACTGAKVAFLCTPNNPTGTVTTPAEVRKVLDGIGDCMLFLDNAYVDFARDDYRPLMGEYENLIIGRTMSKIFGLAGLRVGYAFIPAWLEPFYMKAATPFSGISSVSAAAAVAALADREHRERTLAHMLEWRERVRSAVRFPVLPSEANFLMIDVAPHTADDVVATLAGRGVLIRSCRSFPGLGDHYVRVSIGDAWENERFIEEINRI</sequence>
<proteinExistence type="inferred from homology"/>
<organism>
    <name type="scientific">Methanosphaerula palustris (strain ATCC BAA-1556 / DSM 19958 / E1-9c)</name>
    <dbReference type="NCBI Taxonomy" id="521011"/>
    <lineage>
        <taxon>Archaea</taxon>
        <taxon>Methanobacteriati</taxon>
        <taxon>Methanobacteriota</taxon>
        <taxon>Stenosarchaea group</taxon>
        <taxon>Methanomicrobia</taxon>
        <taxon>Methanomicrobiales</taxon>
        <taxon>Methanoregulaceae</taxon>
        <taxon>Methanosphaerula</taxon>
    </lineage>
</organism>
<reference key="1">
    <citation type="journal article" date="2015" name="Genome Announc.">
        <title>Complete Genome Sequence of Methanosphaerula palustris E1-9CT, a Hydrogenotrophic Methanogen Isolated from a Minerotrophic Fen Peatland.</title>
        <authorList>
            <person name="Cadillo-Quiroz H."/>
            <person name="Browne P."/>
            <person name="Kyrpides N."/>
            <person name="Woyke T."/>
            <person name="Goodwin L."/>
            <person name="Detter C."/>
            <person name="Yavitt J.B."/>
            <person name="Zinder S.H."/>
        </authorList>
    </citation>
    <scope>NUCLEOTIDE SEQUENCE [LARGE SCALE GENOMIC DNA]</scope>
    <source>
        <strain>ATCC BAA-1556 / DSM 19958 / E1-9c</strain>
    </source>
</reference>
<dbReference type="EC" id="2.6.1.9" evidence="1"/>
<dbReference type="EMBL" id="CP001338">
    <property type="protein sequence ID" value="ACL15461.1"/>
    <property type="molecule type" value="Genomic_DNA"/>
</dbReference>
<dbReference type="RefSeq" id="WP_012616780.1">
    <property type="nucleotide sequence ID" value="NC_011832.1"/>
</dbReference>
<dbReference type="SMR" id="B8GIB0"/>
<dbReference type="STRING" id="521011.Mpal_0067"/>
<dbReference type="GeneID" id="7272236"/>
<dbReference type="KEGG" id="mpl:Mpal_0067"/>
<dbReference type="eggNOG" id="arCOG04273">
    <property type="taxonomic scope" value="Archaea"/>
</dbReference>
<dbReference type="HOGENOM" id="CLU_017584_3_3_2"/>
<dbReference type="OrthoDB" id="9929at2157"/>
<dbReference type="UniPathway" id="UPA00031">
    <property type="reaction ID" value="UER00012"/>
</dbReference>
<dbReference type="Proteomes" id="UP000002457">
    <property type="component" value="Chromosome"/>
</dbReference>
<dbReference type="GO" id="GO:0004400">
    <property type="term" value="F:histidinol-phosphate transaminase activity"/>
    <property type="evidence" value="ECO:0007669"/>
    <property type="project" value="UniProtKB-UniRule"/>
</dbReference>
<dbReference type="GO" id="GO:0030170">
    <property type="term" value="F:pyridoxal phosphate binding"/>
    <property type="evidence" value="ECO:0007669"/>
    <property type="project" value="InterPro"/>
</dbReference>
<dbReference type="GO" id="GO:0000105">
    <property type="term" value="P:L-histidine biosynthetic process"/>
    <property type="evidence" value="ECO:0007669"/>
    <property type="project" value="UniProtKB-UniRule"/>
</dbReference>
<dbReference type="CDD" id="cd00609">
    <property type="entry name" value="AAT_like"/>
    <property type="match status" value="1"/>
</dbReference>
<dbReference type="Gene3D" id="3.90.1150.10">
    <property type="entry name" value="Aspartate Aminotransferase, domain 1"/>
    <property type="match status" value="1"/>
</dbReference>
<dbReference type="Gene3D" id="3.40.640.10">
    <property type="entry name" value="Type I PLP-dependent aspartate aminotransferase-like (Major domain)"/>
    <property type="match status" value="1"/>
</dbReference>
<dbReference type="HAMAP" id="MF_01023">
    <property type="entry name" value="HisC_aminotrans_2"/>
    <property type="match status" value="1"/>
</dbReference>
<dbReference type="InterPro" id="IPR004839">
    <property type="entry name" value="Aminotransferase_I/II_large"/>
</dbReference>
<dbReference type="InterPro" id="IPR005861">
    <property type="entry name" value="HisP_aminotrans"/>
</dbReference>
<dbReference type="InterPro" id="IPR050106">
    <property type="entry name" value="HistidinolP_aminotransfase"/>
</dbReference>
<dbReference type="InterPro" id="IPR015424">
    <property type="entry name" value="PyrdxlP-dep_Trfase"/>
</dbReference>
<dbReference type="InterPro" id="IPR015421">
    <property type="entry name" value="PyrdxlP-dep_Trfase_major"/>
</dbReference>
<dbReference type="InterPro" id="IPR015422">
    <property type="entry name" value="PyrdxlP-dep_Trfase_small"/>
</dbReference>
<dbReference type="PANTHER" id="PTHR43643:SF6">
    <property type="entry name" value="HISTIDINOL-PHOSPHATE AMINOTRANSFERASE"/>
    <property type="match status" value="1"/>
</dbReference>
<dbReference type="PANTHER" id="PTHR43643">
    <property type="entry name" value="HISTIDINOL-PHOSPHATE AMINOTRANSFERASE 2"/>
    <property type="match status" value="1"/>
</dbReference>
<dbReference type="Pfam" id="PF00155">
    <property type="entry name" value="Aminotran_1_2"/>
    <property type="match status" value="1"/>
</dbReference>
<dbReference type="SUPFAM" id="SSF53383">
    <property type="entry name" value="PLP-dependent transferases"/>
    <property type="match status" value="1"/>
</dbReference>
<evidence type="ECO:0000255" key="1">
    <source>
        <dbReference type="HAMAP-Rule" id="MF_01023"/>
    </source>
</evidence>
<protein>
    <recommendedName>
        <fullName evidence="1">Histidinol-phosphate aminotransferase</fullName>
        <ecNumber evidence="1">2.6.1.9</ecNumber>
    </recommendedName>
    <alternativeName>
        <fullName evidence="1">Imidazole acetol-phosphate transaminase</fullName>
    </alternativeName>
</protein>
<comment type="catalytic activity">
    <reaction evidence="1">
        <text>L-histidinol phosphate + 2-oxoglutarate = 3-(imidazol-4-yl)-2-oxopropyl phosphate + L-glutamate</text>
        <dbReference type="Rhea" id="RHEA:23744"/>
        <dbReference type="ChEBI" id="CHEBI:16810"/>
        <dbReference type="ChEBI" id="CHEBI:29985"/>
        <dbReference type="ChEBI" id="CHEBI:57766"/>
        <dbReference type="ChEBI" id="CHEBI:57980"/>
        <dbReference type="EC" id="2.6.1.9"/>
    </reaction>
</comment>
<comment type="cofactor">
    <cofactor evidence="1">
        <name>pyridoxal 5'-phosphate</name>
        <dbReference type="ChEBI" id="CHEBI:597326"/>
    </cofactor>
</comment>
<comment type="pathway">
    <text evidence="1">Amino-acid biosynthesis; L-histidine biosynthesis; L-histidine from 5-phospho-alpha-D-ribose 1-diphosphate: step 7/9.</text>
</comment>
<comment type="similarity">
    <text evidence="1">Belongs to the class-II pyridoxal-phosphate-dependent aminotransferase family. Histidinol-phosphate aminotransferase subfamily.</text>
</comment>
<name>HIS8_METPE</name>
<feature type="chain" id="PRO_1000149104" description="Histidinol-phosphate aminotransferase">
    <location>
        <begin position="1"/>
        <end position="351"/>
    </location>
</feature>
<feature type="modified residue" description="N6-(pyridoxal phosphate)lysine" evidence="1">
    <location>
        <position position="214"/>
    </location>
</feature>
<keyword id="KW-0028">Amino-acid biosynthesis</keyword>
<keyword id="KW-0032">Aminotransferase</keyword>
<keyword id="KW-0368">Histidine biosynthesis</keyword>
<keyword id="KW-0663">Pyridoxal phosphate</keyword>
<keyword id="KW-1185">Reference proteome</keyword>
<keyword id="KW-0808">Transferase</keyword>
<gene>
    <name evidence="1" type="primary">hisC</name>
    <name type="ordered locus">Mpal_0067</name>
</gene>
<accession>B8GIB0</accession>